<sequence>MSKFVPENVQKKLARDEKLRKAKAEQRKASSAQMKQRKAEWISKAQKYAAEYEAAEKKIVDEKRKARKTGAFYVPAEAKVAFAIRIRGVNQLHPDVKRVLRLFRLRQLHNGAFFRVNKASLNMIKRVLPFITFGYPTRNTISKLIYKRGFAKVNGQRIPLTDNTIVEKSLGKFGITCVEDLIHEITTVGPHFKEANNFLWPFKLDTPRGGFRNKRHAYHQGGDWGNREVYINDLVKAML</sequence>
<protein>
    <recommendedName>
        <fullName evidence="2">Large ribosomal subunit protein uL30</fullName>
    </recommendedName>
    <alternativeName>
        <fullName>60S ribosomal protein L7</fullName>
    </alternativeName>
</protein>
<name>RL7_TETTH</name>
<comment type="similarity">
    <text evidence="2">Belongs to the universal ribosomal protein uL30 family.</text>
</comment>
<proteinExistence type="evidence at protein level"/>
<dbReference type="EMBL" id="CN599129">
    <property type="status" value="NOT_ANNOTATED_CDS"/>
    <property type="molecule type" value="mRNA"/>
</dbReference>
<dbReference type="PDB" id="4V8P">
    <property type="method" value="X-ray"/>
    <property type="resolution" value="3.52 A"/>
    <property type="chains" value="BV/CV/EV/GV=1-239"/>
</dbReference>
<dbReference type="PDBsum" id="4V8P"/>
<dbReference type="SMR" id="P0DJ13"/>
<dbReference type="IntAct" id="P0DJ13">
    <property type="interactions" value="1"/>
</dbReference>
<dbReference type="GO" id="GO:0022625">
    <property type="term" value="C:cytosolic large ribosomal subunit"/>
    <property type="evidence" value="ECO:0007669"/>
    <property type="project" value="TreeGrafter"/>
</dbReference>
<dbReference type="GO" id="GO:0003723">
    <property type="term" value="F:RNA binding"/>
    <property type="evidence" value="ECO:0007669"/>
    <property type="project" value="UniProtKB-KW"/>
</dbReference>
<dbReference type="GO" id="GO:0003735">
    <property type="term" value="F:structural constituent of ribosome"/>
    <property type="evidence" value="ECO:0007669"/>
    <property type="project" value="InterPro"/>
</dbReference>
<dbReference type="GO" id="GO:0000463">
    <property type="term" value="P:maturation of LSU-rRNA from tricistronic rRNA transcript (SSU-rRNA, 5.8S rRNA, LSU-rRNA)"/>
    <property type="evidence" value="ECO:0007669"/>
    <property type="project" value="InterPro"/>
</dbReference>
<dbReference type="CDD" id="cd01657">
    <property type="entry name" value="Ribosomal_L7_archeal_euk"/>
    <property type="match status" value="1"/>
</dbReference>
<dbReference type="FunFam" id="3.30.1390.20:FF:000003">
    <property type="entry name" value="60S ribosomal protein L7"/>
    <property type="match status" value="1"/>
</dbReference>
<dbReference type="Gene3D" id="3.30.1390.20">
    <property type="entry name" value="Ribosomal protein L30, ferredoxin-like fold domain"/>
    <property type="match status" value="2"/>
</dbReference>
<dbReference type="InterPro" id="IPR036919">
    <property type="entry name" value="Ribo_uL30_ferredoxin-like_sf"/>
</dbReference>
<dbReference type="InterPro" id="IPR039699">
    <property type="entry name" value="Ribosomal_uL30"/>
</dbReference>
<dbReference type="InterPro" id="IPR005998">
    <property type="entry name" value="Ribosomal_uL30_euk"/>
</dbReference>
<dbReference type="InterPro" id="IPR035808">
    <property type="entry name" value="Ribosomal_uL30_euk_arc"/>
</dbReference>
<dbReference type="InterPro" id="IPR016082">
    <property type="entry name" value="Ribosomal_uL30_ferredoxin-like"/>
</dbReference>
<dbReference type="InterPro" id="IPR012988">
    <property type="entry name" value="Ribosomal_uL30_N_euk"/>
</dbReference>
<dbReference type="NCBIfam" id="TIGR01310">
    <property type="entry name" value="uL30_euk"/>
    <property type="match status" value="1"/>
</dbReference>
<dbReference type="PANTHER" id="PTHR11524">
    <property type="entry name" value="60S RIBOSOMAL PROTEIN L7"/>
    <property type="match status" value="1"/>
</dbReference>
<dbReference type="PANTHER" id="PTHR11524:SF16">
    <property type="entry name" value="LARGE RIBOSOMAL SUBUNIT PROTEIN UL30"/>
    <property type="match status" value="1"/>
</dbReference>
<dbReference type="Pfam" id="PF00327">
    <property type="entry name" value="Ribosomal_L30"/>
    <property type="match status" value="1"/>
</dbReference>
<dbReference type="Pfam" id="PF08079">
    <property type="entry name" value="Ribosomal_L30_N"/>
    <property type="match status" value="1"/>
</dbReference>
<dbReference type="SUPFAM" id="SSF55129">
    <property type="entry name" value="Ribosomal protein L30p/L7e"/>
    <property type="match status" value="1"/>
</dbReference>
<reference key="1">
    <citation type="submission" date="2006-05" db="EMBL/GenBank/DDBJ databases">
        <title>PEPdbPub Tetrahymena thermophila (TIGR).</title>
        <authorList>
            <person name="Garg J."/>
            <person name="Pearlman R.E."/>
            <person name="Carlton J."/>
        </authorList>
    </citation>
    <scope>NUCLEOTIDE SEQUENCE [LARGE SCALE MRNA]</scope>
</reference>
<reference key="2">
    <citation type="journal article" date="2011" name="Science">
        <title>Crystal structure of the eukaryotic 60S ribosomal subunit in complex with initiation factor 6.</title>
        <authorList>
            <person name="Klinge S."/>
            <person name="Voigts-Hoffmann F."/>
            <person name="Leibundgut M."/>
            <person name="Arpagaus S."/>
            <person name="Ban N."/>
        </authorList>
    </citation>
    <scope>X-RAY CRYSTALLOGRAPHY (3.52 ANGSTROMS) OF 60S RIBOSOME</scope>
</reference>
<feature type="chain" id="PRO_0000413493" description="Large ribosomal subunit protein uL30">
    <location>
        <begin position="1"/>
        <end position="239"/>
    </location>
</feature>
<feature type="region of interest" description="Disordered" evidence="1">
    <location>
        <begin position="1"/>
        <end position="37"/>
    </location>
</feature>
<feature type="compositionally biased region" description="Basic and acidic residues" evidence="1">
    <location>
        <begin position="9"/>
        <end position="28"/>
    </location>
</feature>
<organism>
    <name type="scientific">Tetrahymena thermophila</name>
    <dbReference type="NCBI Taxonomy" id="5911"/>
    <lineage>
        <taxon>Eukaryota</taxon>
        <taxon>Sar</taxon>
        <taxon>Alveolata</taxon>
        <taxon>Ciliophora</taxon>
        <taxon>Intramacronucleata</taxon>
        <taxon>Oligohymenophorea</taxon>
        <taxon>Hymenostomatida</taxon>
        <taxon>Tetrahymenina</taxon>
        <taxon>Tetrahymenidae</taxon>
        <taxon>Tetrahymena</taxon>
    </lineage>
</organism>
<gene>
    <name type="primary">RPL7</name>
</gene>
<accession>P0DJ13</accession>
<evidence type="ECO:0000256" key="1">
    <source>
        <dbReference type="SAM" id="MobiDB-lite"/>
    </source>
</evidence>
<evidence type="ECO:0000305" key="2"/>
<keyword id="KW-0002">3D-structure</keyword>
<keyword id="KW-0687">Ribonucleoprotein</keyword>
<keyword id="KW-0689">Ribosomal protein</keyword>
<keyword id="KW-0694">RNA-binding</keyword>